<comment type="function">
    <text evidence="1 2">Interacts with the heterotrimeric G protein beta subunit GB1 and plays an significant role in GB1-dependent regulation of lateral root formation. Involved in a signaling pathway that modulates root auxin transport and auxin gradients. Acts partially by positively regulating the auxin carrier PIN2 and AUX1 (PubMed:19948787). Acts, together with GB1 as positive regulator of meristem initiation and branching. GB1 and NDL1 positively regulate basipetal inflorescence auxin transport and modulate MAX2 expression in shoots, which regulates organ and lateral meristem formation by the establishment and maintenance of auxin gradients (PubMed:24223735).</text>
</comment>
<comment type="subunit">
    <text evidence="1">Interacts with GB1. Interacts with the heterodimers formed by GB1 and GG1, or GB1 and GG2. Interacts with RGS1.</text>
</comment>
<comment type="subcellular location">
    <subcellularLocation>
        <location evidence="1">Cytoplasm</location>
    </subcellularLocation>
    <text evidence="1">Localizes in punctate cytoplasmic structures.</text>
</comment>
<comment type="tissue specificity">
    <text evidence="1">Expressed in root vasculature, cotyledons, leaves, petals, mature stamens and pollen grains.</text>
</comment>
<comment type="induction">
    <text evidence="1">Induced by sucrose and glucose. Down-regulated by auxin.</text>
</comment>
<comment type="disruption phenotype">
    <text evidence="1">Slight reduction in length of primary root.</text>
</comment>
<comment type="similarity">
    <text evidence="4">Belongs to the NDRG family.</text>
</comment>
<proteinExistence type="evidence at protein level"/>
<evidence type="ECO:0000269" key="1">
    <source>
    </source>
</evidence>
<evidence type="ECO:0000269" key="2">
    <source>
    </source>
</evidence>
<evidence type="ECO:0000303" key="3">
    <source>
    </source>
</evidence>
<evidence type="ECO:0000305" key="4"/>
<evidence type="ECO:0000312" key="5">
    <source>
        <dbReference type="Araport" id="AT5G56750"/>
    </source>
</evidence>
<evidence type="ECO:0000312" key="6">
    <source>
        <dbReference type="EMBL" id="BAB09893.1"/>
    </source>
</evidence>
<dbReference type="EMBL" id="AB013392">
    <property type="protein sequence ID" value="BAB09893.1"/>
    <property type="molecule type" value="Genomic_DNA"/>
</dbReference>
<dbReference type="EMBL" id="CP002688">
    <property type="protein sequence ID" value="AED96803.1"/>
    <property type="molecule type" value="Genomic_DNA"/>
</dbReference>
<dbReference type="EMBL" id="AY050428">
    <property type="protein sequence ID" value="AAK91444.1"/>
    <property type="molecule type" value="mRNA"/>
</dbReference>
<dbReference type="EMBL" id="AY090332">
    <property type="protein sequence ID" value="AAL90993.1"/>
    <property type="molecule type" value="mRNA"/>
</dbReference>
<dbReference type="EMBL" id="AY087544">
    <property type="protein sequence ID" value="AAM65086.1"/>
    <property type="molecule type" value="mRNA"/>
</dbReference>
<dbReference type="RefSeq" id="NP_200486.1">
    <property type="nucleotide sequence ID" value="NM_125058.3"/>
</dbReference>
<dbReference type="SMR" id="Q9FJT7"/>
<dbReference type="FunCoup" id="Q9FJT7">
    <property type="interactions" value="1282"/>
</dbReference>
<dbReference type="STRING" id="3702.Q9FJT7"/>
<dbReference type="ESTHER" id="arath-At5g56750">
    <property type="family name" value="Ndr_family"/>
</dbReference>
<dbReference type="PaxDb" id="3702-AT5G56750.1"/>
<dbReference type="EnsemblPlants" id="AT5G56750.1">
    <property type="protein sequence ID" value="AT5G56750.1"/>
    <property type="gene ID" value="AT5G56750"/>
</dbReference>
<dbReference type="GeneID" id="835777"/>
<dbReference type="Gramene" id="AT5G56750.1">
    <property type="protein sequence ID" value="AT5G56750.1"/>
    <property type="gene ID" value="AT5G56750"/>
</dbReference>
<dbReference type="KEGG" id="ath:AT5G56750"/>
<dbReference type="Araport" id="AT5G56750"/>
<dbReference type="TAIR" id="AT5G56750">
    <property type="gene designation" value="NDL1"/>
</dbReference>
<dbReference type="eggNOG" id="KOG2931">
    <property type="taxonomic scope" value="Eukaryota"/>
</dbReference>
<dbReference type="HOGENOM" id="CLU_035361_2_0_1"/>
<dbReference type="InParanoid" id="Q9FJT7"/>
<dbReference type="OrthoDB" id="741027at2759"/>
<dbReference type="PhylomeDB" id="Q9FJT7"/>
<dbReference type="PRO" id="PR:Q9FJT7"/>
<dbReference type="Proteomes" id="UP000006548">
    <property type="component" value="Chromosome 5"/>
</dbReference>
<dbReference type="ExpressionAtlas" id="Q9FJT7">
    <property type="expression patterns" value="baseline and differential"/>
</dbReference>
<dbReference type="GO" id="GO:0005737">
    <property type="term" value="C:cytoplasm"/>
    <property type="evidence" value="ECO:0000314"/>
    <property type="project" value="UniProtKB"/>
</dbReference>
<dbReference type="GO" id="GO:0060918">
    <property type="term" value="P:auxin transport"/>
    <property type="evidence" value="ECO:0000315"/>
    <property type="project" value="TAIR"/>
</dbReference>
<dbReference type="GO" id="GO:2000012">
    <property type="term" value="P:regulation of auxin polar transport"/>
    <property type="evidence" value="ECO:0000315"/>
    <property type="project" value="UniProtKB"/>
</dbReference>
<dbReference type="GO" id="GO:0009733">
    <property type="term" value="P:response to auxin"/>
    <property type="evidence" value="ECO:0000314"/>
    <property type="project" value="TAIR"/>
</dbReference>
<dbReference type="GO" id="GO:0009753">
    <property type="term" value="P:response to jasmonic acid"/>
    <property type="evidence" value="ECO:0000314"/>
    <property type="project" value="TAIR"/>
</dbReference>
<dbReference type="GO" id="GO:0009751">
    <property type="term" value="P:response to salicylic acid"/>
    <property type="evidence" value="ECO:0000314"/>
    <property type="project" value="TAIR"/>
</dbReference>
<dbReference type="FunFam" id="3.40.50.1820:FF:000144">
    <property type="entry name" value="Ndr family protein"/>
    <property type="match status" value="1"/>
</dbReference>
<dbReference type="Gene3D" id="3.40.50.1820">
    <property type="entry name" value="alpha/beta hydrolase"/>
    <property type="match status" value="1"/>
</dbReference>
<dbReference type="InterPro" id="IPR029058">
    <property type="entry name" value="AB_hydrolase_fold"/>
</dbReference>
<dbReference type="InterPro" id="IPR004142">
    <property type="entry name" value="NDRG"/>
</dbReference>
<dbReference type="PANTHER" id="PTHR11034">
    <property type="entry name" value="N-MYC DOWNSTREAM REGULATED"/>
    <property type="match status" value="1"/>
</dbReference>
<dbReference type="Pfam" id="PF03096">
    <property type="entry name" value="Ndr"/>
    <property type="match status" value="1"/>
</dbReference>
<dbReference type="SUPFAM" id="SSF53474">
    <property type="entry name" value="alpha/beta-Hydrolases"/>
    <property type="match status" value="1"/>
</dbReference>
<reference key="1">
    <citation type="journal article" date="1998" name="DNA Res.">
        <title>Structural analysis of Arabidopsis thaliana chromosome 5. VI. Sequence features of the regions of 1,367,185 bp covered by 19 physically assigned P1 and TAC clones.</title>
        <authorList>
            <person name="Kotani H."/>
            <person name="Nakamura Y."/>
            <person name="Sato S."/>
            <person name="Asamizu E."/>
            <person name="Kaneko T."/>
            <person name="Miyajima N."/>
            <person name="Tabata S."/>
        </authorList>
    </citation>
    <scope>NUCLEOTIDE SEQUENCE [LARGE SCALE GENOMIC DNA]</scope>
    <source>
        <strain>cv. Columbia</strain>
    </source>
</reference>
<reference key="2">
    <citation type="journal article" date="2017" name="Plant J.">
        <title>Araport11: a complete reannotation of the Arabidopsis thaliana reference genome.</title>
        <authorList>
            <person name="Cheng C.Y."/>
            <person name="Krishnakumar V."/>
            <person name="Chan A.P."/>
            <person name="Thibaud-Nissen F."/>
            <person name="Schobel S."/>
            <person name="Town C.D."/>
        </authorList>
    </citation>
    <scope>GENOME REANNOTATION</scope>
    <source>
        <strain>cv. Columbia</strain>
    </source>
</reference>
<reference key="3">
    <citation type="journal article" date="2003" name="Science">
        <title>Empirical analysis of transcriptional activity in the Arabidopsis genome.</title>
        <authorList>
            <person name="Yamada K."/>
            <person name="Lim J."/>
            <person name="Dale J.M."/>
            <person name="Chen H."/>
            <person name="Shinn P."/>
            <person name="Palm C.J."/>
            <person name="Southwick A.M."/>
            <person name="Wu H.C."/>
            <person name="Kim C.J."/>
            <person name="Nguyen M."/>
            <person name="Pham P.K."/>
            <person name="Cheuk R.F."/>
            <person name="Karlin-Newmann G."/>
            <person name="Liu S.X."/>
            <person name="Lam B."/>
            <person name="Sakano H."/>
            <person name="Wu T."/>
            <person name="Yu G."/>
            <person name="Miranda M."/>
            <person name="Quach H.L."/>
            <person name="Tripp M."/>
            <person name="Chang C.H."/>
            <person name="Lee J.M."/>
            <person name="Toriumi M.J."/>
            <person name="Chan M.M."/>
            <person name="Tang C.C."/>
            <person name="Onodera C.S."/>
            <person name="Deng J.M."/>
            <person name="Akiyama K."/>
            <person name="Ansari Y."/>
            <person name="Arakawa T."/>
            <person name="Banh J."/>
            <person name="Banno F."/>
            <person name="Bowser L."/>
            <person name="Brooks S.Y."/>
            <person name="Carninci P."/>
            <person name="Chao Q."/>
            <person name="Choy N."/>
            <person name="Enju A."/>
            <person name="Goldsmith A.D."/>
            <person name="Gurjal M."/>
            <person name="Hansen N.F."/>
            <person name="Hayashizaki Y."/>
            <person name="Johnson-Hopson C."/>
            <person name="Hsuan V.W."/>
            <person name="Iida K."/>
            <person name="Karnes M."/>
            <person name="Khan S."/>
            <person name="Koesema E."/>
            <person name="Ishida J."/>
            <person name="Jiang P.X."/>
            <person name="Jones T."/>
            <person name="Kawai J."/>
            <person name="Kamiya A."/>
            <person name="Meyers C."/>
            <person name="Nakajima M."/>
            <person name="Narusaka M."/>
            <person name="Seki M."/>
            <person name="Sakurai T."/>
            <person name="Satou M."/>
            <person name="Tamse R."/>
            <person name="Vaysberg M."/>
            <person name="Wallender E.K."/>
            <person name="Wong C."/>
            <person name="Yamamura Y."/>
            <person name="Yuan S."/>
            <person name="Shinozaki K."/>
            <person name="Davis R.W."/>
            <person name="Theologis A."/>
            <person name="Ecker J.R."/>
        </authorList>
    </citation>
    <scope>NUCLEOTIDE SEQUENCE [LARGE SCALE MRNA]</scope>
    <source>
        <strain>cv. Columbia</strain>
    </source>
</reference>
<reference key="4">
    <citation type="submission" date="2002-03" db="EMBL/GenBank/DDBJ databases">
        <title>Full-length cDNA from Arabidopsis thaliana.</title>
        <authorList>
            <person name="Brover V.V."/>
            <person name="Troukhan M.E."/>
            <person name="Alexandrov N.A."/>
            <person name="Lu Y.-P."/>
            <person name="Flavell R.B."/>
            <person name="Feldmann K.A."/>
        </authorList>
    </citation>
    <scope>NUCLEOTIDE SEQUENCE [LARGE SCALE MRNA]</scope>
</reference>
<reference key="5">
    <citation type="journal article" date="2009" name="Plant Cell">
        <title>Arabidopsis N-MYC DOWNREGULATED-LIKE1, a positive regulator of auxin transport in a G protein-mediated pathway.</title>
        <authorList>
            <person name="Mudgil Y."/>
            <person name="Uhrig J.F."/>
            <person name="Zhou J."/>
            <person name="Temple B."/>
            <person name="Jiang K."/>
            <person name="Jones A.M."/>
        </authorList>
    </citation>
    <scope>FUNCTION</scope>
    <scope>INTERACTION WITH GB1; GG1; GG2 AND RGS1</scope>
    <scope>SUBCELLULAR LOCATION</scope>
    <scope>TISSUE SPECIFICITY</scope>
    <scope>INDUCTION</scope>
    <scope>DISRUPTION PHENOTYPE</scope>
</reference>
<reference key="6">
    <citation type="journal article" date="2013" name="PLoS ONE">
        <title>N-MYC down-regulated-like proteins regulate meristem initiation by modulating auxin transport and MAX2 expression.</title>
        <authorList>
            <person name="Mudgil Y."/>
            <person name="Ghawana S."/>
            <person name="Jones A.M."/>
        </authorList>
    </citation>
    <scope>FUNCTION</scope>
</reference>
<accession>Q9FJT7</accession>
<keyword id="KW-0963">Cytoplasm</keyword>
<keyword id="KW-0341">Growth regulation</keyword>
<keyword id="KW-1185">Reference proteome</keyword>
<sequence>MTDSYGAVSVDVGTIYLGGKEHRVKTASGVVSVIVYGDREKPALITYPDLALNHMSCFQGLFFCPEAASLLLHNFCIYHISPPGHELGAAPICPNDSVPSAENLADQILEVLNFFGLGVVMCMGVTAGAYILTLFAMKHRERVLGLILVSPLCKAPSWSEWFYNKVITNLLYYYGMCGVVKEFLLQRYFSKEVRGNVEIPESDIAQACRRLLDERQGINVLRFLDAIDRRPDISSGLKKLKCRTLIFIGDQSPFYSEAVHMAATLDRGYCALVEVQACGSMVTEEQPHAMLIPMEYFLMGYGLYRPSLFSESPRSPLSPSCISPELLSPESMGLKLKPIKTRISAA</sequence>
<name>NDL1_ARATH</name>
<organism>
    <name type="scientific">Arabidopsis thaliana</name>
    <name type="common">Mouse-ear cress</name>
    <dbReference type="NCBI Taxonomy" id="3702"/>
    <lineage>
        <taxon>Eukaryota</taxon>
        <taxon>Viridiplantae</taxon>
        <taxon>Streptophyta</taxon>
        <taxon>Embryophyta</taxon>
        <taxon>Tracheophyta</taxon>
        <taxon>Spermatophyta</taxon>
        <taxon>Magnoliopsida</taxon>
        <taxon>eudicotyledons</taxon>
        <taxon>Gunneridae</taxon>
        <taxon>Pentapetalae</taxon>
        <taxon>rosids</taxon>
        <taxon>malvids</taxon>
        <taxon>Brassicales</taxon>
        <taxon>Brassicaceae</taxon>
        <taxon>Camelineae</taxon>
        <taxon>Arabidopsis</taxon>
    </lineage>
</organism>
<feature type="chain" id="PRO_0000442104" description="Protein NDL1">
    <location>
        <begin position="1"/>
        <end position="346"/>
    </location>
</feature>
<gene>
    <name evidence="3" type="primary">NDL1</name>
    <name evidence="5" type="ordered locus">At5g56750</name>
    <name evidence="6" type="ORF">MIK19.22</name>
</gene>
<protein>
    <recommendedName>
        <fullName evidence="4">Protein NDL1</fullName>
    </recommendedName>
    <alternativeName>
        <fullName evidence="3">Protein N-MYC DOWNREGULATED-LIKE 1</fullName>
    </alternativeName>
</protein>